<name>Y687_METJA</name>
<gene>
    <name type="ordered locus">MJ0687</name>
</gene>
<sequence>MNYKYLILSLFLIVGVFFAGCTQQMNADEIAKKMQEKYEAMKSMEADVLITTNIMGQTETMQYKYAFEKPNKFYMENDDVLIVCDGKTYYMYDKKKNQYTKMEIKGELNNMFNPDYGKFIKSMLEKFNVSYLGEKTYDGRKCYVLELISKENPEEKMKMYVDEEYWQPLKIEMDGVTIEYKNVKFNVDVPDDRFKFVPPEGAKLMSSGAMTTSKNIDEVQKDVSFKILVPKYTAGLELQNAMATKQNANNEESETVILTYGENGELAIIESKDNKPLTIPENGSNLITLKNGVKALISDSGDVKMLMFEYNGIKVIIAGKLDKNELIKIANSMIE</sequence>
<organism>
    <name type="scientific">Methanocaldococcus jannaschii (strain ATCC 43067 / DSM 2661 / JAL-1 / JCM 10045 / NBRC 100440)</name>
    <name type="common">Methanococcus jannaschii</name>
    <dbReference type="NCBI Taxonomy" id="243232"/>
    <lineage>
        <taxon>Archaea</taxon>
        <taxon>Methanobacteriati</taxon>
        <taxon>Methanobacteriota</taxon>
        <taxon>Methanomada group</taxon>
        <taxon>Methanococci</taxon>
        <taxon>Methanococcales</taxon>
        <taxon>Methanocaldococcaceae</taxon>
        <taxon>Methanocaldococcus</taxon>
    </lineage>
</organism>
<accession>Q58100</accession>
<reference key="1">
    <citation type="journal article" date="1996" name="Science">
        <title>Complete genome sequence of the methanogenic archaeon, Methanococcus jannaschii.</title>
        <authorList>
            <person name="Bult C.J."/>
            <person name="White O."/>
            <person name="Olsen G.J."/>
            <person name="Zhou L."/>
            <person name="Fleischmann R.D."/>
            <person name="Sutton G.G."/>
            <person name="Blake J.A."/>
            <person name="FitzGerald L.M."/>
            <person name="Clayton R.A."/>
            <person name="Gocayne J.D."/>
            <person name="Kerlavage A.R."/>
            <person name="Dougherty B.A."/>
            <person name="Tomb J.-F."/>
            <person name="Adams M.D."/>
            <person name="Reich C.I."/>
            <person name="Overbeek R."/>
            <person name="Kirkness E.F."/>
            <person name="Weinstock K.G."/>
            <person name="Merrick J.M."/>
            <person name="Glodek A."/>
            <person name="Scott J.L."/>
            <person name="Geoghagen N.S.M."/>
            <person name="Weidman J.F."/>
            <person name="Fuhrmann J.L."/>
            <person name="Nguyen D."/>
            <person name="Utterback T.R."/>
            <person name="Kelley J.M."/>
            <person name="Peterson J.D."/>
            <person name="Sadow P.W."/>
            <person name="Hanna M.C."/>
            <person name="Cotton M.D."/>
            <person name="Roberts K.M."/>
            <person name="Hurst M.A."/>
            <person name="Kaine B.P."/>
            <person name="Borodovsky M."/>
            <person name="Klenk H.-P."/>
            <person name="Fraser C.M."/>
            <person name="Smith H.O."/>
            <person name="Woese C.R."/>
            <person name="Venter J.C."/>
        </authorList>
    </citation>
    <scope>NUCLEOTIDE SEQUENCE [LARGE SCALE GENOMIC DNA]</scope>
    <source>
        <strain>ATCC 43067 / DSM 2661 / JAL-1 / JCM 10045 / NBRC 100440</strain>
    </source>
</reference>
<dbReference type="EMBL" id="L77117">
    <property type="protein sequence ID" value="AAB98682.1"/>
    <property type="molecule type" value="Genomic_DNA"/>
</dbReference>
<dbReference type="PIR" id="G64385">
    <property type="entry name" value="G64385"/>
</dbReference>
<dbReference type="RefSeq" id="WP_010870192.1">
    <property type="nucleotide sequence ID" value="NC_000909.1"/>
</dbReference>
<dbReference type="SMR" id="Q58100"/>
<dbReference type="STRING" id="243232.MJ_0687"/>
<dbReference type="PaxDb" id="243232-MJ_0687"/>
<dbReference type="EnsemblBacteria" id="AAB98682">
    <property type="protein sequence ID" value="AAB98682"/>
    <property type="gene ID" value="MJ_0687"/>
</dbReference>
<dbReference type="GeneID" id="1451553"/>
<dbReference type="KEGG" id="mja:MJ_0687"/>
<dbReference type="eggNOG" id="arCOG02470">
    <property type="taxonomic scope" value="Archaea"/>
</dbReference>
<dbReference type="HOGENOM" id="CLU_040882_2_0_2"/>
<dbReference type="InParanoid" id="Q58100"/>
<dbReference type="OrthoDB" id="137725at2157"/>
<dbReference type="PhylomeDB" id="Q58100"/>
<dbReference type="Proteomes" id="UP000000805">
    <property type="component" value="Chromosome"/>
</dbReference>
<dbReference type="CDD" id="cd16329">
    <property type="entry name" value="LolA_like"/>
    <property type="match status" value="1"/>
</dbReference>
<dbReference type="Gene3D" id="2.50.20.10">
    <property type="entry name" value="Lipoprotein localisation LolA/LolB/LppX"/>
    <property type="match status" value="1"/>
</dbReference>
<dbReference type="InterPro" id="IPR025377">
    <property type="entry name" value="DUF4367"/>
</dbReference>
<dbReference type="InterPro" id="IPR029046">
    <property type="entry name" value="LolA/LolB/LppX"/>
</dbReference>
<dbReference type="InterPro" id="IPR033399">
    <property type="entry name" value="Put_LolA-like"/>
</dbReference>
<dbReference type="InterPro" id="IPR052944">
    <property type="entry name" value="Sporulation_related"/>
</dbReference>
<dbReference type="PANTHER" id="PTHR37507">
    <property type="entry name" value="SPORULATION PROTEIN YDCC"/>
    <property type="match status" value="1"/>
</dbReference>
<dbReference type="PANTHER" id="PTHR37507:SF2">
    <property type="entry name" value="SPORULATION PROTEIN YDCC"/>
    <property type="match status" value="1"/>
</dbReference>
<dbReference type="Pfam" id="PF14285">
    <property type="entry name" value="DUF4367"/>
    <property type="match status" value="1"/>
</dbReference>
<dbReference type="Pfam" id="PF17131">
    <property type="entry name" value="LolA_like"/>
    <property type="match status" value="1"/>
</dbReference>
<dbReference type="SUPFAM" id="SSF89392">
    <property type="entry name" value="Prokaryotic lipoproteins and lipoprotein localization factors"/>
    <property type="match status" value="1"/>
</dbReference>
<dbReference type="PROSITE" id="PS51257">
    <property type="entry name" value="PROKAR_LIPOPROTEIN"/>
    <property type="match status" value="1"/>
</dbReference>
<feature type="chain" id="PRO_0000106990" description="Uncharacterized protein MJ0687">
    <location>
        <begin position="1"/>
        <end position="335"/>
    </location>
</feature>
<keyword id="KW-1185">Reference proteome</keyword>
<protein>
    <recommendedName>
        <fullName>Uncharacterized protein MJ0687</fullName>
    </recommendedName>
</protein>
<proteinExistence type="predicted"/>